<feature type="chain" id="PRO_0000158696" description="Succinate dehydrogenase [ubiquinone] iron-sulfur subunit">
    <location>
        <begin position="1"/>
        <end position="239"/>
    </location>
</feature>
<feature type="domain" description="2Fe-2S ferredoxin-type" evidence="2">
    <location>
        <begin position="24"/>
        <end position="99"/>
    </location>
</feature>
<feature type="domain" description="4Fe-4S ferredoxin-type" evidence="3">
    <location>
        <begin position="142"/>
        <end position="172"/>
    </location>
</feature>
<feature type="binding site" evidence="1">
    <location>
        <position position="63"/>
    </location>
    <ligand>
        <name>[2Fe-2S] cluster</name>
        <dbReference type="ChEBI" id="CHEBI:190135"/>
    </ligand>
</feature>
<feature type="binding site" evidence="1">
    <location>
        <position position="68"/>
    </location>
    <ligand>
        <name>[2Fe-2S] cluster</name>
        <dbReference type="ChEBI" id="CHEBI:190135"/>
    </ligand>
</feature>
<feature type="binding site" evidence="1">
    <location>
        <position position="71"/>
    </location>
    <ligand>
        <name>[2Fe-2S] cluster</name>
        <dbReference type="ChEBI" id="CHEBI:190135"/>
    </ligand>
</feature>
<feature type="binding site" evidence="1">
    <location>
        <position position="83"/>
    </location>
    <ligand>
        <name>[2Fe-2S] cluster</name>
        <dbReference type="ChEBI" id="CHEBI:190135"/>
    </ligand>
</feature>
<feature type="binding site" evidence="1">
    <location>
        <position position="152"/>
    </location>
    <ligand>
        <name>[4Fe-4S] cluster</name>
        <dbReference type="ChEBI" id="CHEBI:49883"/>
    </ligand>
</feature>
<feature type="binding site" evidence="1">
    <location>
        <position position="155"/>
    </location>
    <ligand>
        <name>[4Fe-4S] cluster</name>
        <dbReference type="ChEBI" id="CHEBI:49883"/>
    </ligand>
</feature>
<feature type="binding site" evidence="1">
    <location>
        <position position="158"/>
    </location>
    <ligand>
        <name>[4Fe-4S] cluster</name>
        <dbReference type="ChEBI" id="CHEBI:49883"/>
    </ligand>
</feature>
<feature type="binding site" evidence="1">
    <location>
        <position position="162"/>
    </location>
    <ligand>
        <name>[3Fe-4S] cluster</name>
        <dbReference type="ChEBI" id="CHEBI:21137"/>
    </ligand>
</feature>
<feature type="binding site" evidence="1">
    <location>
        <position position="167"/>
    </location>
    <ligand>
        <name>a ubiquinone</name>
        <dbReference type="ChEBI" id="CHEBI:16389"/>
        <note>ligand shared with DHSD</note>
    </ligand>
</feature>
<feature type="binding site" evidence="1">
    <location>
        <position position="209"/>
    </location>
    <ligand>
        <name>[3Fe-4S] cluster</name>
        <dbReference type="ChEBI" id="CHEBI:21137"/>
    </ligand>
</feature>
<feature type="binding site" evidence="1">
    <location>
        <position position="215"/>
    </location>
    <ligand>
        <name>[3Fe-4S] cluster</name>
        <dbReference type="ChEBI" id="CHEBI:21137"/>
    </ligand>
</feature>
<feature type="binding site" evidence="1">
    <location>
        <position position="219"/>
    </location>
    <ligand>
        <name>[4Fe-4S] cluster</name>
        <dbReference type="ChEBI" id="CHEBI:49883"/>
    </ligand>
</feature>
<accession>P80477</accession>
<proteinExistence type="inferred from homology"/>
<sequence length="239" mass="27301">MRPRNNNLNLKFIRIYRWTPSNQAEAKFSVHPIHTSNCGPMILDALIKIKDEQDSSLAFRRSCREGICGSCSMNIDGINTLACLKPIKTNANIITIYPLPHMYIIKDLVPDLSNFFSQYKYIKPWLINNVPKKSEYLQSEKDRSELNGIYECILCACCSASCPSYWWNHDKYLGPAILLQAYRWLADSRDTNAKERLKLLGGKSKLFKCHTIMNCSRTCPKSLNPGKAIASIKHSINYS</sequence>
<gene>
    <name type="primary">SDH2</name>
    <name type="synonym">SDHB</name>
</gene>
<name>SDHB_PORPU</name>
<organism>
    <name type="scientific">Porphyra purpurea</name>
    <name type="common">Red seaweed</name>
    <name type="synonym">Ulva purpurea</name>
    <dbReference type="NCBI Taxonomy" id="2787"/>
    <lineage>
        <taxon>Eukaryota</taxon>
        <taxon>Rhodophyta</taxon>
        <taxon>Bangiophyceae</taxon>
        <taxon>Bangiales</taxon>
        <taxon>Bangiaceae</taxon>
        <taxon>Porphyra</taxon>
    </lineage>
</organism>
<evidence type="ECO:0000250" key="1"/>
<evidence type="ECO:0000255" key="2">
    <source>
        <dbReference type="PROSITE-ProRule" id="PRU00465"/>
    </source>
</evidence>
<evidence type="ECO:0000255" key="3">
    <source>
        <dbReference type="PROSITE-ProRule" id="PRU00711"/>
    </source>
</evidence>
<evidence type="ECO:0000305" key="4"/>
<protein>
    <recommendedName>
        <fullName>Succinate dehydrogenase [ubiquinone] iron-sulfur subunit</fullName>
        <ecNumber>1.3.5.1</ecNumber>
    </recommendedName>
    <alternativeName>
        <fullName>Iron-sulfur subunit of complex II</fullName>
        <shortName>Ip</shortName>
    </alternativeName>
</protein>
<dbReference type="EC" id="1.3.5.1"/>
<dbReference type="SMR" id="P80477"/>
<dbReference type="UniPathway" id="UPA00223">
    <property type="reaction ID" value="UER01006"/>
</dbReference>
<dbReference type="GO" id="GO:0005743">
    <property type="term" value="C:mitochondrial inner membrane"/>
    <property type="evidence" value="ECO:0007669"/>
    <property type="project" value="UniProtKB-SubCell"/>
</dbReference>
<dbReference type="GO" id="GO:0051537">
    <property type="term" value="F:2 iron, 2 sulfur cluster binding"/>
    <property type="evidence" value="ECO:0007669"/>
    <property type="project" value="UniProtKB-KW"/>
</dbReference>
<dbReference type="GO" id="GO:0051538">
    <property type="term" value="F:3 iron, 4 sulfur cluster binding"/>
    <property type="evidence" value="ECO:0007669"/>
    <property type="project" value="UniProtKB-KW"/>
</dbReference>
<dbReference type="GO" id="GO:0051539">
    <property type="term" value="F:4 iron, 4 sulfur cluster binding"/>
    <property type="evidence" value="ECO:0007669"/>
    <property type="project" value="UniProtKB-KW"/>
</dbReference>
<dbReference type="GO" id="GO:0009055">
    <property type="term" value="F:electron transfer activity"/>
    <property type="evidence" value="ECO:0007669"/>
    <property type="project" value="InterPro"/>
</dbReference>
<dbReference type="GO" id="GO:0046872">
    <property type="term" value="F:metal ion binding"/>
    <property type="evidence" value="ECO:0007669"/>
    <property type="project" value="UniProtKB-KW"/>
</dbReference>
<dbReference type="GO" id="GO:0008177">
    <property type="term" value="F:succinate dehydrogenase (quinone) activity"/>
    <property type="evidence" value="ECO:0007669"/>
    <property type="project" value="UniProtKB-EC"/>
</dbReference>
<dbReference type="GO" id="GO:0022904">
    <property type="term" value="P:respiratory electron transport chain"/>
    <property type="evidence" value="ECO:0007669"/>
    <property type="project" value="TreeGrafter"/>
</dbReference>
<dbReference type="GO" id="GO:0006099">
    <property type="term" value="P:tricarboxylic acid cycle"/>
    <property type="evidence" value="ECO:0007669"/>
    <property type="project" value="UniProtKB-UniPathway"/>
</dbReference>
<dbReference type="CDD" id="cd00207">
    <property type="entry name" value="fer2"/>
    <property type="match status" value="1"/>
</dbReference>
<dbReference type="FunFam" id="1.10.1060.10:FF:000001">
    <property type="entry name" value="Succinate dehydrogenase iron-sulfur subunit SdhB"/>
    <property type="match status" value="1"/>
</dbReference>
<dbReference type="Gene3D" id="3.10.20.30">
    <property type="match status" value="1"/>
</dbReference>
<dbReference type="Gene3D" id="1.10.1060.10">
    <property type="entry name" value="Alpha-helical ferredoxin"/>
    <property type="match status" value="1"/>
</dbReference>
<dbReference type="InterPro" id="IPR036010">
    <property type="entry name" value="2Fe-2S_ferredoxin-like_sf"/>
</dbReference>
<dbReference type="InterPro" id="IPR001041">
    <property type="entry name" value="2Fe-2S_ferredoxin-type"/>
</dbReference>
<dbReference type="InterPro" id="IPR006058">
    <property type="entry name" value="2Fe2S_fd_BS"/>
</dbReference>
<dbReference type="InterPro" id="IPR017896">
    <property type="entry name" value="4Fe4S_Fe-S-bd"/>
</dbReference>
<dbReference type="InterPro" id="IPR017900">
    <property type="entry name" value="4Fe4S_Fe_S_CS"/>
</dbReference>
<dbReference type="InterPro" id="IPR012675">
    <property type="entry name" value="Beta-grasp_dom_sf"/>
</dbReference>
<dbReference type="InterPro" id="IPR009051">
    <property type="entry name" value="Helical_ferredxn"/>
</dbReference>
<dbReference type="InterPro" id="IPR050573">
    <property type="entry name" value="SDH/FRD_Iron-Sulfur"/>
</dbReference>
<dbReference type="InterPro" id="IPR004489">
    <property type="entry name" value="Succ_DH/fum_Rdtase_Fe-S"/>
</dbReference>
<dbReference type="InterPro" id="IPR025192">
    <property type="entry name" value="Succ_DH/fum_Rdtase_N"/>
</dbReference>
<dbReference type="NCBIfam" id="TIGR00384">
    <property type="entry name" value="dhsB"/>
    <property type="match status" value="1"/>
</dbReference>
<dbReference type="NCBIfam" id="NF004616">
    <property type="entry name" value="PRK05950.1"/>
    <property type="match status" value="1"/>
</dbReference>
<dbReference type="PANTHER" id="PTHR11921:SF29">
    <property type="entry name" value="SUCCINATE DEHYDROGENASE [UBIQUINONE] IRON-SULFUR SUBUNIT, MITOCHONDRIAL"/>
    <property type="match status" value="1"/>
</dbReference>
<dbReference type="PANTHER" id="PTHR11921">
    <property type="entry name" value="SUCCINATE DEHYDROGENASE IRON-SULFUR PROTEIN"/>
    <property type="match status" value="1"/>
</dbReference>
<dbReference type="Pfam" id="PF13085">
    <property type="entry name" value="Fer2_3"/>
    <property type="match status" value="1"/>
</dbReference>
<dbReference type="Pfam" id="PF13534">
    <property type="entry name" value="Fer4_17"/>
    <property type="match status" value="1"/>
</dbReference>
<dbReference type="SUPFAM" id="SSF54292">
    <property type="entry name" value="2Fe-2S ferredoxin-like"/>
    <property type="match status" value="1"/>
</dbReference>
<dbReference type="SUPFAM" id="SSF46548">
    <property type="entry name" value="alpha-helical ferredoxin"/>
    <property type="match status" value="1"/>
</dbReference>
<dbReference type="PROSITE" id="PS00197">
    <property type="entry name" value="2FE2S_FER_1"/>
    <property type="match status" value="1"/>
</dbReference>
<dbReference type="PROSITE" id="PS51085">
    <property type="entry name" value="2FE2S_FER_2"/>
    <property type="match status" value="1"/>
</dbReference>
<dbReference type="PROSITE" id="PS00198">
    <property type="entry name" value="4FE4S_FER_1"/>
    <property type="match status" value="1"/>
</dbReference>
<dbReference type="PROSITE" id="PS51379">
    <property type="entry name" value="4FE4S_FER_2"/>
    <property type="match status" value="1"/>
</dbReference>
<geneLocation type="mitochondrion"/>
<reference key="1">
    <citation type="journal article" date="1996" name="Proc. Natl. Acad. Sci. U.S.A.">
        <title>Genes encoding the same three subunits of respiratory complex II are present in the mitochondrial DNA of two phylogenetically distant eukaryotes.</title>
        <authorList>
            <person name="Burger G."/>
            <person name="Lang B.F."/>
            <person name="Reith M."/>
            <person name="Gray M.W."/>
        </authorList>
    </citation>
    <scope>NUCLEOTIDE SEQUENCE</scope>
</reference>
<keyword id="KW-0001">2Fe-2S</keyword>
<keyword id="KW-0003">3Fe-4S</keyword>
<keyword id="KW-0004">4Fe-4S</keyword>
<keyword id="KW-0249">Electron transport</keyword>
<keyword id="KW-0408">Iron</keyword>
<keyword id="KW-0411">Iron-sulfur</keyword>
<keyword id="KW-0472">Membrane</keyword>
<keyword id="KW-0479">Metal-binding</keyword>
<keyword id="KW-0496">Mitochondrion</keyword>
<keyword id="KW-0999">Mitochondrion inner membrane</keyword>
<keyword id="KW-0560">Oxidoreductase</keyword>
<keyword id="KW-0813">Transport</keyword>
<keyword id="KW-0816">Tricarboxylic acid cycle</keyword>
<comment type="function">
    <text evidence="1">Iron-sulfur protein (IP) subunit of succinate dehydrogenase (SDH) that is involved in complex II of the mitochondrial electron transport chain and is responsible for transferring electrons from succinate to ubiquinone (coenzyme Q).</text>
</comment>
<comment type="catalytic activity">
    <reaction>
        <text>a quinone + succinate = fumarate + a quinol</text>
        <dbReference type="Rhea" id="RHEA:40523"/>
        <dbReference type="ChEBI" id="CHEBI:24646"/>
        <dbReference type="ChEBI" id="CHEBI:29806"/>
        <dbReference type="ChEBI" id="CHEBI:30031"/>
        <dbReference type="ChEBI" id="CHEBI:132124"/>
        <dbReference type="EC" id="1.3.5.1"/>
    </reaction>
</comment>
<comment type="cofactor">
    <cofactor evidence="1">
        <name>[2Fe-2S] cluster</name>
        <dbReference type="ChEBI" id="CHEBI:190135"/>
    </cofactor>
    <text evidence="1">Binds 1 [2Fe-2S] cluster.</text>
</comment>
<comment type="cofactor">
    <cofactor evidence="1">
        <name>[3Fe-4S] cluster</name>
        <dbReference type="ChEBI" id="CHEBI:21137"/>
    </cofactor>
    <text evidence="1">Binds 1 [3Fe-4S] cluster.</text>
</comment>
<comment type="cofactor">
    <cofactor evidence="1">
        <name>[4Fe-4S] cluster</name>
        <dbReference type="ChEBI" id="CHEBI:49883"/>
    </cofactor>
    <text evidence="1">Binds 1 [4Fe-4S] cluster.</text>
</comment>
<comment type="pathway">
    <text>Carbohydrate metabolism; tricarboxylic acid cycle; fumarate from succinate (eukaryal route): step 1/1.</text>
</comment>
<comment type="subunit">
    <text evidence="1">Component of complex II composed of four subunits: a flavoprotein (FP), an iron-sulfur protein (IP), and a cytochrome b composed of a large and a small subunit.</text>
</comment>
<comment type="subcellular location">
    <subcellularLocation>
        <location evidence="1">Mitochondrion inner membrane</location>
        <topology evidence="1">Peripheral membrane protein</topology>
        <orientation evidence="1">Matrix side</orientation>
    </subcellularLocation>
</comment>
<comment type="similarity">
    <text evidence="4">Belongs to the succinate dehydrogenase/fumarate reductase iron-sulfur protein family.</text>
</comment>